<proteinExistence type="evidence at transcript level"/>
<sequence length="273" mass="31025">MQWNVPKTVFRLAHRTCMEPHKAGLLGHCQNMKGPLLLYTLESRVVVVQGPQKRWLHLPTAQCVAKERKPFTAVQSQPGVFHHKQWEQDILSKRVLSSSATSSGPPSEKKEDPDPLQDRSISLYQRFKKTFRQYGKVLIPVHLITSAVWFGTFYYAAMKGVNVVPFLELIGLPDSIVNILKNSQSGNALTAYALFKIATPARYTVTLGGTSFTVKYLRSRGYMSTPPPVKEYLQDKMEETKELLTEKMEETKDRLTEKLQETKGKVSLKKKVE</sequence>
<organism>
    <name type="scientific">Bos taurus</name>
    <name type="common">Bovine</name>
    <dbReference type="NCBI Taxonomy" id="9913"/>
    <lineage>
        <taxon>Eukaryota</taxon>
        <taxon>Metazoa</taxon>
        <taxon>Chordata</taxon>
        <taxon>Craniata</taxon>
        <taxon>Vertebrata</taxon>
        <taxon>Euteleostomi</taxon>
        <taxon>Mammalia</taxon>
        <taxon>Eutheria</taxon>
        <taxon>Laurasiatheria</taxon>
        <taxon>Artiodactyla</taxon>
        <taxon>Ruminantia</taxon>
        <taxon>Pecora</taxon>
        <taxon>Bovidae</taxon>
        <taxon>Bovinae</taxon>
        <taxon>Bos</taxon>
    </lineage>
</organism>
<comment type="function">
    <text evidence="1">May play a role in the structure and strength of both muscle and bone.</text>
</comment>
<comment type="subunit">
    <text evidence="2">Interacts with ATAD3A.</text>
</comment>
<comment type="subcellular location">
    <subcellularLocation>
        <location evidence="3">Membrane</location>
        <topology evidence="3">Single-pass membrane protein</topology>
    </subcellularLocation>
    <subcellularLocation>
        <location evidence="1">Mitochondrion</location>
    </subcellularLocation>
    <subcellularLocation>
        <location evidence="1">Cytoplasm</location>
    </subcellularLocation>
</comment>
<comment type="similarity">
    <text evidence="5">Belongs to the FAM210 family.</text>
</comment>
<accession>Q05B67</accession>
<evidence type="ECO:0000250" key="1">
    <source>
        <dbReference type="UniProtKB" id="Q8BGY7"/>
    </source>
</evidence>
<evidence type="ECO:0000250" key="2">
    <source>
        <dbReference type="UniProtKB" id="Q96ND0"/>
    </source>
</evidence>
<evidence type="ECO:0000255" key="3"/>
<evidence type="ECO:0000256" key="4">
    <source>
        <dbReference type="SAM" id="MobiDB-lite"/>
    </source>
</evidence>
<evidence type="ECO:0000305" key="5"/>
<name>F210A_BOVIN</name>
<gene>
    <name type="primary">FAM210A</name>
</gene>
<protein>
    <recommendedName>
        <fullName>Protein FAM210A</fullName>
    </recommendedName>
</protein>
<keyword id="KW-0175">Coiled coil</keyword>
<keyword id="KW-0963">Cytoplasm</keyword>
<keyword id="KW-0472">Membrane</keyword>
<keyword id="KW-0496">Mitochondrion</keyword>
<keyword id="KW-1185">Reference proteome</keyword>
<keyword id="KW-0812">Transmembrane</keyword>
<keyword id="KW-1133">Transmembrane helix</keyword>
<dbReference type="EMBL" id="BC122695">
    <property type="protein sequence ID" value="AAI22696.1"/>
    <property type="molecule type" value="mRNA"/>
</dbReference>
<dbReference type="RefSeq" id="NP_001073728.1">
    <property type="nucleotide sequence ID" value="NM_001080259.1"/>
</dbReference>
<dbReference type="RefSeq" id="NP_001422134.1">
    <property type="nucleotide sequence ID" value="NM_001435205.1"/>
</dbReference>
<dbReference type="RefSeq" id="NP_001422135.1">
    <property type="nucleotide sequence ID" value="NM_001435206.1"/>
</dbReference>
<dbReference type="RefSeq" id="XP_005224210.1">
    <property type="nucleotide sequence ID" value="XM_005224153.2"/>
</dbReference>
<dbReference type="RefSeq" id="XP_005224211.1">
    <property type="nucleotide sequence ID" value="XM_005224154.3"/>
</dbReference>
<dbReference type="RefSeq" id="XP_005224212.1">
    <property type="nucleotide sequence ID" value="XM_005224155.5"/>
</dbReference>
<dbReference type="SMR" id="Q05B67"/>
<dbReference type="FunCoup" id="Q05B67">
    <property type="interactions" value="1046"/>
</dbReference>
<dbReference type="STRING" id="9913.ENSBTAP00000012046"/>
<dbReference type="PaxDb" id="9913-ENSBTAP00000012046"/>
<dbReference type="Ensembl" id="ENSBTAT00000012046.4">
    <property type="protein sequence ID" value="ENSBTAP00000012046.3"/>
    <property type="gene ID" value="ENSBTAG00000009141.4"/>
</dbReference>
<dbReference type="GeneID" id="511554"/>
<dbReference type="KEGG" id="bta:511554"/>
<dbReference type="CTD" id="125228"/>
<dbReference type="VEuPathDB" id="HostDB:ENSBTAG00000009141"/>
<dbReference type="VGNC" id="VGNC:28788">
    <property type="gene designation" value="FAM210A"/>
</dbReference>
<dbReference type="eggNOG" id="KOG4082">
    <property type="taxonomic scope" value="Eukaryota"/>
</dbReference>
<dbReference type="GeneTree" id="ENSGT00940000156554"/>
<dbReference type="HOGENOM" id="CLU_085747_0_0_1"/>
<dbReference type="InParanoid" id="Q05B67"/>
<dbReference type="OMA" id="MQWNVLR"/>
<dbReference type="OrthoDB" id="5874039at2759"/>
<dbReference type="TreeFam" id="TF313283"/>
<dbReference type="Proteomes" id="UP000009136">
    <property type="component" value="Chromosome 24"/>
</dbReference>
<dbReference type="Bgee" id="ENSBTAG00000009141">
    <property type="expression patterns" value="Expressed in semen and 107 other cell types or tissues"/>
</dbReference>
<dbReference type="GO" id="GO:0005737">
    <property type="term" value="C:cytoplasm"/>
    <property type="evidence" value="ECO:0000250"/>
    <property type="project" value="UniProtKB"/>
</dbReference>
<dbReference type="GO" id="GO:0016020">
    <property type="term" value="C:membrane"/>
    <property type="evidence" value="ECO:0007669"/>
    <property type="project" value="UniProtKB-SubCell"/>
</dbReference>
<dbReference type="GO" id="GO:0005739">
    <property type="term" value="C:mitochondrion"/>
    <property type="evidence" value="ECO:0000250"/>
    <property type="project" value="UniProtKB"/>
</dbReference>
<dbReference type="Gene3D" id="6.10.140.1430">
    <property type="match status" value="1"/>
</dbReference>
<dbReference type="InterPro" id="IPR045866">
    <property type="entry name" value="FAM210A/B-like"/>
</dbReference>
<dbReference type="InterPro" id="IPR009688">
    <property type="entry name" value="FAM210A/B-like_dom"/>
</dbReference>
<dbReference type="PANTHER" id="PTHR21377:SF1">
    <property type="entry name" value="PROTEIN FAM210A"/>
    <property type="match status" value="1"/>
</dbReference>
<dbReference type="PANTHER" id="PTHR21377">
    <property type="entry name" value="PROTEIN FAM210B, MITOCHONDRIAL"/>
    <property type="match status" value="1"/>
</dbReference>
<dbReference type="Pfam" id="PF06916">
    <property type="entry name" value="FAM210A-B_dom"/>
    <property type="match status" value="1"/>
</dbReference>
<feature type="chain" id="PRO_0000274423" description="Protein FAM210A">
    <location>
        <begin position="1"/>
        <end position="273"/>
    </location>
</feature>
<feature type="transmembrane region" description="Helical" evidence="3">
    <location>
        <begin position="137"/>
        <end position="157"/>
    </location>
</feature>
<feature type="domain" description="DUF1279">
    <location>
        <begin position="118"/>
        <end position="230"/>
    </location>
</feature>
<feature type="region of interest" description="Disordered" evidence="4">
    <location>
        <begin position="97"/>
        <end position="116"/>
    </location>
</feature>
<feature type="region of interest" description="Disordered" evidence="4">
    <location>
        <begin position="247"/>
        <end position="273"/>
    </location>
</feature>
<feature type="coiled-coil region" evidence="3">
    <location>
        <begin position="230"/>
        <end position="269"/>
    </location>
</feature>
<feature type="compositionally biased region" description="Low complexity" evidence="4">
    <location>
        <begin position="97"/>
        <end position="106"/>
    </location>
</feature>
<feature type="compositionally biased region" description="Basic and acidic residues" evidence="4">
    <location>
        <begin position="107"/>
        <end position="116"/>
    </location>
</feature>
<reference key="1">
    <citation type="submission" date="2006-08" db="EMBL/GenBank/DDBJ databases">
        <authorList>
            <consortium name="NIH - Mammalian Gene Collection (MGC) project"/>
        </authorList>
    </citation>
    <scope>NUCLEOTIDE SEQUENCE [LARGE SCALE MRNA]</scope>
    <source>
        <strain>Hereford</strain>
        <tissue>Fetal muscle</tissue>
    </source>
</reference>